<feature type="chain" id="PRO_0000132729" description="Squamosa promoter-binding-like protein 8">
    <location>
        <begin position="1"/>
        <end position="333"/>
    </location>
</feature>
<feature type="zinc finger region" description="SBP-type" evidence="3">
    <location>
        <begin position="185"/>
        <end position="262"/>
    </location>
</feature>
<feature type="region of interest" description="Disordered" evidence="4">
    <location>
        <begin position="1"/>
        <end position="28"/>
    </location>
</feature>
<feature type="region of interest" description="Sufficient and necessary for DNA binding">
    <location>
        <begin position="179"/>
        <end position="269"/>
    </location>
</feature>
<feature type="region of interest" description="Disordered" evidence="4">
    <location>
        <begin position="254"/>
        <end position="303"/>
    </location>
</feature>
<feature type="region of interest" description="Disordered" evidence="4">
    <location>
        <begin position="314"/>
        <end position="333"/>
    </location>
</feature>
<feature type="short sequence motif" description="Bipartite nuclear localization signal" evidence="2">
    <location>
        <begin position="245"/>
        <end position="261"/>
    </location>
</feature>
<feature type="compositionally biased region" description="Basic and acidic residues" evidence="4">
    <location>
        <begin position="16"/>
        <end position="25"/>
    </location>
</feature>
<feature type="compositionally biased region" description="Polar residues" evidence="4">
    <location>
        <begin position="264"/>
        <end position="284"/>
    </location>
</feature>
<feature type="compositionally biased region" description="Low complexity" evidence="4">
    <location>
        <begin position="289"/>
        <end position="299"/>
    </location>
</feature>
<feature type="binding site" evidence="3">
    <location>
        <position position="188"/>
    </location>
    <ligand>
        <name>Zn(2+)</name>
        <dbReference type="ChEBI" id="CHEBI:29105"/>
        <label>1</label>
    </ligand>
</feature>
<feature type="binding site" evidence="3">
    <location>
        <position position="193"/>
    </location>
    <ligand>
        <name>Zn(2+)</name>
        <dbReference type="ChEBI" id="CHEBI:29105"/>
        <label>1</label>
    </ligand>
</feature>
<feature type="binding site" evidence="3">
    <location>
        <position position="210"/>
    </location>
    <ligand>
        <name>Zn(2+)</name>
        <dbReference type="ChEBI" id="CHEBI:29105"/>
        <label>1</label>
    </ligand>
</feature>
<feature type="binding site" evidence="3">
    <location>
        <position position="213"/>
    </location>
    <ligand>
        <name>Zn(2+)</name>
        <dbReference type="ChEBI" id="CHEBI:29105"/>
        <label>1</label>
    </ligand>
</feature>
<feature type="binding site" evidence="3">
    <location>
        <position position="229"/>
    </location>
    <ligand>
        <name>Zn(2+)</name>
        <dbReference type="ChEBI" id="CHEBI:29105"/>
        <label>2</label>
    </ligand>
</feature>
<feature type="binding site" evidence="3">
    <location>
        <position position="232"/>
    </location>
    <ligand>
        <name>Zn(2+)</name>
        <dbReference type="ChEBI" id="CHEBI:29105"/>
        <label>2</label>
    </ligand>
</feature>
<feature type="binding site" evidence="3">
    <location>
        <position position="236"/>
    </location>
    <ligand>
        <name>Zn(2+)</name>
        <dbReference type="ChEBI" id="CHEBI:29105"/>
        <label>2</label>
    </ligand>
</feature>
<feature type="binding site" evidence="3">
    <location>
        <position position="248"/>
    </location>
    <ligand>
        <name>Zn(2+)</name>
        <dbReference type="ChEBI" id="CHEBI:29105"/>
        <label>2</label>
    </ligand>
</feature>
<feature type="mutagenesis site" description="Slight decrease in DNA binding efficiency." evidence="7">
    <original>S</original>
    <variation>A</variation>
    <location>
        <position position="233"/>
    </location>
</feature>
<feature type="mutagenesis site" description="Slight decrease in DNA binding and nuclear import efficiency." evidence="7">
    <original>S</original>
    <variation>A</variation>
    <location>
        <position position="247"/>
    </location>
</feature>
<feature type="mutagenesis site" description="Complete loss of DNA binding. Slight increase in nuclear import efficiency." evidence="7">
    <original>S</original>
    <variation>D</variation>
    <location>
        <position position="247"/>
    </location>
</feature>
<feature type="mutagenesis site" description="Increase in nuclear import efficiency." evidence="7">
    <original>C</original>
    <variation>A</variation>
    <location>
        <position position="248"/>
    </location>
</feature>
<feature type="sequence conflict" description="In Ref. 4; BAC42797." evidence="9" ref="4">
    <original>H</original>
    <variation>Q</variation>
    <location>
        <position position="63"/>
    </location>
</feature>
<feature type="sequence conflict" description="In Ref. 4; BAC42797." evidence="9" ref="4">
    <original>Q</original>
    <variation>R</variation>
    <location>
        <position position="310"/>
    </location>
</feature>
<proteinExistence type="evidence at protein level"/>
<dbReference type="EMBL" id="AJ011641">
    <property type="protein sequence ID" value="CAB56593.1"/>
    <property type="molecule type" value="Genomic_DNA"/>
</dbReference>
<dbReference type="EMBL" id="AJ011642">
    <property type="protein sequence ID" value="CAB56594.1"/>
    <property type="molecule type" value="mRNA"/>
</dbReference>
<dbReference type="EMBL" id="U89959">
    <property type="status" value="NOT_ANNOTATED_CDS"/>
    <property type="molecule type" value="Genomic_DNA"/>
</dbReference>
<dbReference type="EMBL" id="CP002684">
    <property type="protein sequence ID" value="AEE27374.1"/>
    <property type="molecule type" value="Genomic_DNA"/>
</dbReference>
<dbReference type="EMBL" id="AK118174">
    <property type="protein sequence ID" value="BAC42797.1"/>
    <property type="molecule type" value="mRNA"/>
</dbReference>
<dbReference type="PIR" id="T52594">
    <property type="entry name" value="T52594"/>
</dbReference>
<dbReference type="RefSeq" id="NP_683267.1">
    <molecule id="Q8GXL3-1"/>
    <property type="nucleotide sequence ID" value="NM_148426.5"/>
</dbReference>
<dbReference type="SMR" id="Q8GXL3"/>
<dbReference type="BioGRID" id="24510">
    <property type="interactions" value="3"/>
</dbReference>
<dbReference type="FunCoup" id="Q8GXL3">
    <property type="interactions" value="1"/>
</dbReference>
<dbReference type="IntAct" id="Q8GXL3">
    <property type="interactions" value="1"/>
</dbReference>
<dbReference type="STRING" id="3702.Q8GXL3"/>
<dbReference type="GlyGen" id="Q8GXL3">
    <property type="glycosylation" value="1 site, 1 O-linked glycan (1 site)"/>
</dbReference>
<dbReference type="iPTMnet" id="Q8GXL3"/>
<dbReference type="PaxDb" id="3702-AT1G02065.1"/>
<dbReference type="ProteomicsDB" id="232489">
    <molecule id="Q8GXL3-1"/>
</dbReference>
<dbReference type="EnsemblPlants" id="AT1G02065.1">
    <molecule id="Q8GXL3-1"/>
    <property type="protein sequence ID" value="AT1G02065.1"/>
    <property type="gene ID" value="AT1G02065"/>
</dbReference>
<dbReference type="GeneID" id="839275"/>
<dbReference type="Gramene" id="AT1G02065.1">
    <molecule id="Q8GXL3-1"/>
    <property type="protein sequence ID" value="AT1G02065.1"/>
    <property type="gene ID" value="AT1G02065"/>
</dbReference>
<dbReference type="KEGG" id="ath:AT1G02065"/>
<dbReference type="Araport" id="AT1G02065"/>
<dbReference type="TAIR" id="AT1G02065">
    <property type="gene designation" value="SPL8"/>
</dbReference>
<dbReference type="eggNOG" id="ENOG502QWHY">
    <property type="taxonomic scope" value="Eukaryota"/>
</dbReference>
<dbReference type="HOGENOM" id="CLU_082879_0_0_1"/>
<dbReference type="InParanoid" id="Q8GXL3"/>
<dbReference type="OMA" id="DPRITNH"/>
<dbReference type="PhylomeDB" id="Q8GXL3"/>
<dbReference type="PRO" id="PR:Q8GXL3"/>
<dbReference type="Proteomes" id="UP000006548">
    <property type="component" value="Chromosome 1"/>
</dbReference>
<dbReference type="ExpressionAtlas" id="Q8GXL3">
    <property type="expression patterns" value="baseline and differential"/>
</dbReference>
<dbReference type="GO" id="GO:0005737">
    <property type="term" value="C:cytoplasm"/>
    <property type="evidence" value="ECO:0007669"/>
    <property type="project" value="UniProtKB-SubCell"/>
</dbReference>
<dbReference type="GO" id="GO:0005634">
    <property type="term" value="C:nucleus"/>
    <property type="evidence" value="ECO:0000250"/>
    <property type="project" value="TAIR"/>
</dbReference>
<dbReference type="GO" id="GO:0003677">
    <property type="term" value="F:DNA binding"/>
    <property type="evidence" value="ECO:0000250"/>
    <property type="project" value="TAIR"/>
</dbReference>
<dbReference type="GO" id="GO:0008270">
    <property type="term" value="F:zinc ion binding"/>
    <property type="evidence" value="ECO:0007669"/>
    <property type="project" value="UniProtKB-KW"/>
</dbReference>
<dbReference type="GO" id="GO:0048653">
    <property type="term" value="P:anther development"/>
    <property type="evidence" value="ECO:0000316"/>
    <property type="project" value="TAIR"/>
</dbReference>
<dbReference type="GO" id="GO:0030154">
    <property type="term" value="P:cell differentiation"/>
    <property type="evidence" value="ECO:0007669"/>
    <property type="project" value="UniProtKB-KW"/>
</dbReference>
<dbReference type="GO" id="GO:0009554">
    <property type="term" value="P:megasporogenesis"/>
    <property type="evidence" value="ECO:0000315"/>
    <property type="project" value="TAIR"/>
</dbReference>
<dbReference type="GO" id="GO:0009556">
    <property type="term" value="P:microsporogenesis"/>
    <property type="evidence" value="ECO:0000315"/>
    <property type="project" value="TAIR"/>
</dbReference>
<dbReference type="FunFam" id="4.10.1100.10:FF:000001">
    <property type="entry name" value="Squamosa promoter-binding-like protein 14"/>
    <property type="match status" value="1"/>
</dbReference>
<dbReference type="Gene3D" id="4.10.1100.10">
    <property type="entry name" value="Transcription factor, SBP-box domain"/>
    <property type="match status" value="1"/>
</dbReference>
<dbReference type="InterPro" id="IPR044817">
    <property type="entry name" value="SBP-like"/>
</dbReference>
<dbReference type="InterPro" id="IPR004333">
    <property type="entry name" value="SBP_dom"/>
</dbReference>
<dbReference type="InterPro" id="IPR036893">
    <property type="entry name" value="SBP_sf"/>
</dbReference>
<dbReference type="PANTHER" id="PTHR31251">
    <property type="entry name" value="SQUAMOSA PROMOTER-BINDING-LIKE PROTEIN 4"/>
    <property type="match status" value="1"/>
</dbReference>
<dbReference type="PANTHER" id="PTHR31251:SF169">
    <property type="entry name" value="SQUAMOSA PROMOTER-BINDING-LIKE PROTEIN 8"/>
    <property type="match status" value="1"/>
</dbReference>
<dbReference type="Pfam" id="PF03110">
    <property type="entry name" value="SBP"/>
    <property type="match status" value="1"/>
</dbReference>
<dbReference type="SUPFAM" id="SSF103612">
    <property type="entry name" value="SBT domain"/>
    <property type="match status" value="1"/>
</dbReference>
<dbReference type="PROSITE" id="PS51141">
    <property type="entry name" value="ZF_SBP"/>
    <property type="match status" value="1"/>
</dbReference>
<comment type="function">
    <text evidence="6 7 8">Trans-acting factor that binds specifically to the consensus nucleotide sequence 5'-TNCGTACAA-3'. Binds specifically to the 5'-GTAC-3' core sequence. Involved in development and floral organogenesis. Required for ovule differentiation, pollen production, filament elongation, seed formation and siliques elongation. Also seems to play a role in the formation of trichomes on sepals. May positively modulate gibberellin (GA) signaling in flower.</text>
</comment>
<comment type="cofactor">
    <cofactor evidence="1">
        <name>Zn(2+)</name>
        <dbReference type="ChEBI" id="CHEBI:29105"/>
    </cofactor>
    <text evidence="1">Binds 2 Zn(2+) ions per subunit.</text>
</comment>
<comment type="subcellular location">
    <subcellularLocation>
        <location evidence="7">Nucleus</location>
    </subcellularLocation>
    <subcellularLocation>
        <location evidence="7">Cytoplasm</location>
    </subcellularLocation>
    <text>Mostly located in nucleus.</text>
</comment>
<comment type="alternative products">
    <event type="alternative splicing"/>
    <isoform>
        <id>Q8GXL3-1</id>
        <name>1</name>
        <sequence type="displayed"/>
    </isoform>
    <text>A number of isoforms are produced. According to EST sequences.</text>
</comment>
<comment type="tissue specificity">
    <text evidence="6 8">Expressed in shoot apical region and early floral tissues. Transcripts levels increase in developing pollen sacs, and decrease in later stage of anther development. Strongly expressed in the placental region of the carpels.</text>
</comment>
<comment type="developmental stage">
    <text evidence="5 6">Expressed during plant development. During pollen development, required for crosporogenesis that leads to archesporial formation and for the histogenesis of the microsporangia. During ovules development, involved in the transition to meiosis of the megaspore mother cells.</text>
</comment>
<comment type="domain">
    <text>The SBP-type zinc finger is required for the binding to DNA.</text>
</comment>
<gene>
    <name type="primary">SPL8</name>
    <name type="ordered locus">At1g02065</name>
    <name type="ORF">T7I23.32</name>
</gene>
<protein>
    <recommendedName>
        <fullName>Squamosa promoter-binding-like protein 8</fullName>
    </recommendedName>
</protein>
<organism>
    <name type="scientific">Arabidopsis thaliana</name>
    <name type="common">Mouse-ear cress</name>
    <dbReference type="NCBI Taxonomy" id="3702"/>
    <lineage>
        <taxon>Eukaryota</taxon>
        <taxon>Viridiplantae</taxon>
        <taxon>Streptophyta</taxon>
        <taxon>Embryophyta</taxon>
        <taxon>Tracheophyta</taxon>
        <taxon>Spermatophyta</taxon>
        <taxon>Magnoliopsida</taxon>
        <taxon>eudicotyledons</taxon>
        <taxon>Gunneridae</taxon>
        <taxon>Pentapetalae</taxon>
        <taxon>rosids</taxon>
        <taxon>malvids</taxon>
        <taxon>Brassicales</taxon>
        <taxon>Brassicaceae</taxon>
        <taxon>Camelineae</taxon>
        <taxon>Arabidopsis</taxon>
    </lineage>
</organism>
<sequence length="333" mass="36827">MLDYEWDNPSSIVLSGDERNPDSDPTRSSFSFFDPISHYNNDHRHITISPPLLSSFSNQQQQHHLTLYGQTNSNNQFLHHHHHHHSLYGSTTTTTPYGASDPIYHPHSSAPPASLFSYDQTGPGSGSGSSYNFLIPKTEVDFTSNRIGLNLGGRTYFSAADDDFVSRLYRRSRPGESGMANSLSTPRCQAEGCNADLSHAKHYHRRHKVCEFHSKASTVVAAGLSQRFCQQCSRFHLLSEFDNGKRSCRKRLADHNRRRRKCHQSASATQDTGTGKTTPKSPNDSGVKASSSPSSNAPPTISLECFRQRQFQTTASSSTSASSSSNSMFFSSG</sequence>
<name>SPL8_ARATH</name>
<reference key="1">
    <citation type="journal article" date="1999" name="Gene">
        <title>Molecular characterization of the Arabidopsis SBP-box genes.</title>
        <authorList>
            <person name="Cardon G.H."/>
            <person name="Hoehmann S."/>
            <person name="Klein J."/>
            <person name="Nettesheim K."/>
            <person name="Saedler H."/>
            <person name="Huijser P."/>
        </authorList>
    </citation>
    <scope>NUCLEOTIDE SEQUENCE [GENOMIC DNA / MRNA]</scope>
    <scope>DEVELOPMENTAL STAGE</scope>
    <source>
        <strain>cv. Columbia</strain>
        <tissue>Flower</tissue>
    </source>
</reference>
<reference key="2">
    <citation type="journal article" date="2000" name="Nature">
        <title>Sequence and analysis of chromosome 1 of the plant Arabidopsis thaliana.</title>
        <authorList>
            <person name="Theologis A."/>
            <person name="Ecker J.R."/>
            <person name="Palm C.J."/>
            <person name="Federspiel N.A."/>
            <person name="Kaul S."/>
            <person name="White O."/>
            <person name="Alonso J."/>
            <person name="Altafi H."/>
            <person name="Araujo R."/>
            <person name="Bowman C.L."/>
            <person name="Brooks S.Y."/>
            <person name="Buehler E."/>
            <person name="Chan A."/>
            <person name="Chao Q."/>
            <person name="Chen H."/>
            <person name="Cheuk R.F."/>
            <person name="Chin C.W."/>
            <person name="Chung M.K."/>
            <person name="Conn L."/>
            <person name="Conway A.B."/>
            <person name="Conway A.R."/>
            <person name="Creasy T.H."/>
            <person name="Dewar K."/>
            <person name="Dunn P."/>
            <person name="Etgu P."/>
            <person name="Feldblyum T.V."/>
            <person name="Feng J.-D."/>
            <person name="Fong B."/>
            <person name="Fujii C.Y."/>
            <person name="Gill J.E."/>
            <person name="Goldsmith A.D."/>
            <person name="Haas B."/>
            <person name="Hansen N.F."/>
            <person name="Hughes B."/>
            <person name="Huizar L."/>
            <person name="Hunter J.L."/>
            <person name="Jenkins J."/>
            <person name="Johnson-Hopson C."/>
            <person name="Khan S."/>
            <person name="Khaykin E."/>
            <person name="Kim C.J."/>
            <person name="Koo H.L."/>
            <person name="Kremenetskaia I."/>
            <person name="Kurtz D.B."/>
            <person name="Kwan A."/>
            <person name="Lam B."/>
            <person name="Langin-Hooper S."/>
            <person name="Lee A."/>
            <person name="Lee J.M."/>
            <person name="Lenz C.A."/>
            <person name="Li J.H."/>
            <person name="Li Y.-P."/>
            <person name="Lin X."/>
            <person name="Liu S.X."/>
            <person name="Liu Z.A."/>
            <person name="Luros J.S."/>
            <person name="Maiti R."/>
            <person name="Marziali A."/>
            <person name="Militscher J."/>
            <person name="Miranda M."/>
            <person name="Nguyen M."/>
            <person name="Nierman W.C."/>
            <person name="Osborne B.I."/>
            <person name="Pai G."/>
            <person name="Peterson J."/>
            <person name="Pham P.K."/>
            <person name="Rizzo M."/>
            <person name="Rooney T."/>
            <person name="Rowley D."/>
            <person name="Sakano H."/>
            <person name="Salzberg S.L."/>
            <person name="Schwartz J.R."/>
            <person name="Shinn P."/>
            <person name="Southwick A.M."/>
            <person name="Sun H."/>
            <person name="Tallon L.J."/>
            <person name="Tambunga G."/>
            <person name="Toriumi M.J."/>
            <person name="Town C.D."/>
            <person name="Utterback T."/>
            <person name="Van Aken S."/>
            <person name="Vaysberg M."/>
            <person name="Vysotskaia V.S."/>
            <person name="Walker M."/>
            <person name="Wu D."/>
            <person name="Yu G."/>
            <person name="Fraser C.M."/>
            <person name="Venter J.C."/>
            <person name="Davis R.W."/>
        </authorList>
    </citation>
    <scope>NUCLEOTIDE SEQUENCE [LARGE SCALE GENOMIC DNA]</scope>
    <source>
        <strain>cv. Columbia</strain>
    </source>
</reference>
<reference key="3">
    <citation type="journal article" date="2017" name="Plant J.">
        <title>Araport11: a complete reannotation of the Arabidopsis thaliana reference genome.</title>
        <authorList>
            <person name="Cheng C.Y."/>
            <person name="Krishnakumar V."/>
            <person name="Chan A.P."/>
            <person name="Thibaud-Nissen F."/>
            <person name="Schobel S."/>
            <person name="Town C.D."/>
        </authorList>
    </citation>
    <scope>GENOME REANNOTATION</scope>
    <source>
        <strain>cv. Columbia</strain>
    </source>
</reference>
<reference key="4">
    <citation type="journal article" date="2002" name="Science">
        <title>Functional annotation of a full-length Arabidopsis cDNA collection.</title>
        <authorList>
            <person name="Seki M."/>
            <person name="Narusaka M."/>
            <person name="Kamiya A."/>
            <person name="Ishida J."/>
            <person name="Satou M."/>
            <person name="Sakurai T."/>
            <person name="Nakajima M."/>
            <person name="Enju A."/>
            <person name="Akiyama K."/>
            <person name="Oono Y."/>
            <person name="Muramatsu M."/>
            <person name="Hayashizaki Y."/>
            <person name="Kawai J."/>
            <person name="Carninci P."/>
            <person name="Itoh M."/>
            <person name="Ishii Y."/>
            <person name="Arakawa T."/>
            <person name="Shibata K."/>
            <person name="Shinagawa A."/>
            <person name="Shinozaki K."/>
        </authorList>
    </citation>
    <scope>NUCLEOTIDE SEQUENCE [LARGE SCALE MRNA]</scope>
    <source>
        <strain>cv. Columbia</strain>
    </source>
</reference>
<reference key="5">
    <citation type="journal article" date="2003" name="Plant Cell">
        <title>SPL8, an SBP-box gene that affects pollen sac development in Arabidopsis.</title>
        <authorList>
            <person name="Unte U.S."/>
            <person name="Sorensen A.-M."/>
            <person name="Pesaresi P."/>
            <person name="Gandikota M."/>
            <person name="Leister D."/>
            <person name="Saedler H."/>
            <person name="Huijser P."/>
        </authorList>
    </citation>
    <scope>FUNCTION</scope>
    <scope>DEVELOPMENTAL STAGE</scope>
    <scope>TISSUE SPECIFICITY</scope>
</reference>
<reference key="6">
    <citation type="journal article" date="2005" name="J. Mol. Biol.">
        <title>Functional dissection of the plant-specific SBP-domain: overlap of the DNA-binding and nuclear localization domains.</title>
        <authorList>
            <person name="Birkenbihl R.P."/>
            <person name="Jach G."/>
            <person name="Saedler H."/>
            <person name="Huijser P."/>
        </authorList>
    </citation>
    <scope>FUNCTION</scope>
    <scope>SUBCELLULAR LOCATION</scope>
    <scope>NUCLEAR LOCALIZATION SIGNAL</scope>
    <scope>REGION</scope>
    <scope>MUTAGENESIS OF SER-233; SER-247 AND CYS-248</scope>
</reference>
<reference key="7">
    <citation type="journal article" date="2007" name="Plant Mol. Biol.">
        <title>SPL8, a local regulator in a subset of gibberellin-mediated developmental processes in Arabidopsis.</title>
        <authorList>
            <person name="Zhang Y."/>
            <person name="Schwarz S."/>
            <person name="Saedler H."/>
            <person name="Huijser P."/>
        </authorList>
    </citation>
    <scope>FUNCTION</scope>
    <scope>TISSUE SPECIFICITY</scope>
    <scope>INDUCTION</scope>
</reference>
<keyword id="KW-0025">Alternative splicing</keyword>
<keyword id="KW-0963">Cytoplasm</keyword>
<keyword id="KW-0217">Developmental protein</keyword>
<keyword id="KW-0221">Differentiation</keyword>
<keyword id="KW-0238">DNA-binding</keyword>
<keyword id="KW-0287">Flowering</keyword>
<keyword id="KW-0479">Metal-binding</keyword>
<keyword id="KW-0539">Nucleus</keyword>
<keyword id="KW-1185">Reference proteome</keyword>
<keyword id="KW-0804">Transcription</keyword>
<keyword id="KW-0805">Transcription regulation</keyword>
<keyword id="KW-0862">Zinc</keyword>
<keyword id="KW-0863">Zinc-finger</keyword>
<evidence type="ECO:0000250" key="1"/>
<evidence type="ECO:0000255" key="2"/>
<evidence type="ECO:0000255" key="3">
    <source>
        <dbReference type="PROSITE-ProRule" id="PRU00470"/>
    </source>
</evidence>
<evidence type="ECO:0000256" key="4">
    <source>
        <dbReference type="SAM" id="MobiDB-lite"/>
    </source>
</evidence>
<evidence type="ECO:0000269" key="5">
    <source>
    </source>
</evidence>
<evidence type="ECO:0000269" key="6">
    <source>
    </source>
</evidence>
<evidence type="ECO:0000269" key="7">
    <source>
    </source>
</evidence>
<evidence type="ECO:0000269" key="8">
    <source>
    </source>
</evidence>
<evidence type="ECO:0000305" key="9"/>
<accession>Q8GXL3</accession>
<accession>Q9S849</accession>